<protein>
    <recommendedName>
        <fullName>DNA polymerase</fullName>
        <ecNumber>2.7.7.7</ecNumber>
        <ecNumber evidence="1">3.1.11.-</ecNumber>
    </recommendedName>
</protein>
<sequence length="924" mass="106837">MGSALDTLKEFNPKPMKGQGSKKARIIIVQENPFDYEYRKKKYMTGKAGKLLKFGLAEVGIDPDEDVYYTSIVKYPTPENRLPTPDEIKESMDYMWAEIEVIDPDIIIPTGNLSLKFLTKMTAITKVRGKLYEIEGRKFFPMIHPNTVLKQPKYQDFFIKDLEILASLLEGKTPKNVLAFTKERRYCDTFEDAIDEIKRYLELPAGSRVVIDLETVKTNPFIEKVTMKKTTLEAYPMSQQPKIVGIGLSDRSGYGCAIPLYHRENLMKGNQIGTIVKFLRKLLEREDLEFIAHNGKFDIRWLRASLDIYLDISIWDTMLIHIIDYRGERYSWSKRLAWLETDMGGYDDALDGEKPKGEDEGNYDLIPWDILKVYLADDCDVTFRLSEKYIPLVEENEEKKWLWENIMVPGYYTLLDIEMDGIHVDREWLEVLRVSYEKEISRLEDKMREFPEGVAMEREMRDKWKERVMIGNIKSANRTPEQQDKFKKYKKYDPSKGGDKINFGSTKQLGELLFERMGLETVIFTDKGAPSTNDDSLKFMGSQSDFVKVLMEFRKANHLYNNFVSKLSLMIDPDNIVHPSYNIHGTVTGRLSSNEPNAQQFPRKVNTPTLFQYNFEIKKMFNSRFGDGGVIVQFDYSQLELRILVCYYSRPYTIDLYRSGADLHKAVASDAFGVAIEEVSKDQRTASKKIQFGIVYQESARGLSEDLRAEGITMSEDECEIFIKKYFKRFPKVSKWIRDTKKHVKDISTVKTLTGATRNLPDIDSIDQSKANEAERQAVNTPIQGTGSDCTLMSLILINQWLRESGLRSRICITVHDSIVLDCPKDEVLEVAKKVKHIMENLGEYNEFYKFLGDVPILSEMEIGRNYGDAFEATIEDIEEHGVDGFIEMKEKEKLEKDMKEFTKIIEDGGSIPDYARIYWENIS</sequence>
<dbReference type="EC" id="2.7.7.7"/>
<dbReference type="EC" id="3.1.11.-" evidence="1"/>
<dbReference type="EMBL" id="M84415">
    <property type="protein sequence ID" value="AAA03732.1"/>
    <property type="status" value="ALT_SEQ"/>
    <property type="molecule type" value="Unassigned_DNA"/>
</dbReference>
<dbReference type="EMBL" id="M37686">
    <property type="protein sequence ID" value="AAA64535.1"/>
    <property type="molecule type" value="Genomic_DNA"/>
</dbReference>
<dbReference type="PIR" id="JC1269">
    <property type="entry name" value="JC1269"/>
</dbReference>
<dbReference type="SMR" id="P30314"/>
<dbReference type="GO" id="GO:0008408">
    <property type="term" value="F:3'-5' exonuclease activity"/>
    <property type="evidence" value="ECO:0007669"/>
    <property type="project" value="InterPro"/>
</dbReference>
<dbReference type="GO" id="GO:0003677">
    <property type="term" value="F:DNA binding"/>
    <property type="evidence" value="ECO:0007669"/>
    <property type="project" value="UniProtKB-KW"/>
</dbReference>
<dbReference type="GO" id="GO:0003887">
    <property type="term" value="F:DNA-directed DNA polymerase activity"/>
    <property type="evidence" value="ECO:0007669"/>
    <property type="project" value="UniProtKB-KW"/>
</dbReference>
<dbReference type="GO" id="GO:0006261">
    <property type="term" value="P:DNA-templated DNA replication"/>
    <property type="evidence" value="ECO:0007669"/>
    <property type="project" value="InterPro"/>
</dbReference>
<dbReference type="GO" id="GO:0006302">
    <property type="term" value="P:double-strand break repair"/>
    <property type="evidence" value="ECO:0007669"/>
    <property type="project" value="TreeGrafter"/>
</dbReference>
<dbReference type="GO" id="GO:0039693">
    <property type="term" value="P:viral DNA genome replication"/>
    <property type="evidence" value="ECO:0007669"/>
    <property type="project" value="UniProtKB-KW"/>
</dbReference>
<dbReference type="CDD" id="cd10030">
    <property type="entry name" value="UDG-F4_TTUDGA_SPO1dp_like"/>
    <property type="match status" value="1"/>
</dbReference>
<dbReference type="FunFam" id="1.10.150.20:FF:000002">
    <property type="entry name" value="DNA polymerase I"/>
    <property type="match status" value="1"/>
</dbReference>
<dbReference type="Gene3D" id="3.30.70.370">
    <property type="match status" value="1"/>
</dbReference>
<dbReference type="Gene3D" id="1.10.150.20">
    <property type="entry name" value="5' to 3' exonuclease, C-terminal subdomain"/>
    <property type="match status" value="1"/>
</dbReference>
<dbReference type="Gene3D" id="3.30.420.10">
    <property type="entry name" value="Ribonuclease H-like superfamily/Ribonuclease H"/>
    <property type="match status" value="1"/>
</dbReference>
<dbReference type="Gene3D" id="1.20.1060.10">
    <property type="entry name" value="Taq DNA Polymerase, Chain T, domain 4"/>
    <property type="match status" value="1"/>
</dbReference>
<dbReference type="Gene3D" id="3.40.470.10">
    <property type="entry name" value="Uracil-DNA glycosylase-like domain"/>
    <property type="match status" value="1"/>
</dbReference>
<dbReference type="InterPro" id="IPR002562">
    <property type="entry name" value="3'-5'_exonuclease_dom"/>
</dbReference>
<dbReference type="InterPro" id="IPR019760">
    <property type="entry name" value="DNA-dir_DNA_pol_A_CS"/>
</dbReference>
<dbReference type="InterPro" id="IPR001098">
    <property type="entry name" value="DNA-dir_DNA_pol_A_palm_dom"/>
</dbReference>
<dbReference type="InterPro" id="IPR043502">
    <property type="entry name" value="DNA/RNA_pol_sf"/>
</dbReference>
<dbReference type="InterPro" id="IPR002298">
    <property type="entry name" value="DNA_polymerase_A"/>
</dbReference>
<dbReference type="InterPro" id="IPR012337">
    <property type="entry name" value="RNaseH-like_sf"/>
</dbReference>
<dbReference type="InterPro" id="IPR036397">
    <property type="entry name" value="RNaseH_sf"/>
</dbReference>
<dbReference type="InterPro" id="IPR005122">
    <property type="entry name" value="Uracil-DNA_glycosylase-like"/>
</dbReference>
<dbReference type="InterPro" id="IPR036895">
    <property type="entry name" value="Uracil-DNA_glycosylase-like_sf"/>
</dbReference>
<dbReference type="PANTHER" id="PTHR10133">
    <property type="entry name" value="DNA POLYMERASE I"/>
    <property type="match status" value="1"/>
</dbReference>
<dbReference type="PANTHER" id="PTHR10133:SF27">
    <property type="entry name" value="DNA POLYMERASE NU"/>
    <property type="match status" value="1"/>
</dbReference>
<dbReference type="Pfam" id="PF00476">
    <property type="entry name" value="DNA_pol_A"/>
    <property type="match status" value="1"/>
</dbReference>
<dbReference type="Pfam" id="PF01612">
    <property type="entry name" value="DNA_pol_A_exo1"/>
    <property type="match status" value="1"/>
</dbReference>
<dbReference type="Pfam" id="PF03167">
    <property type="entry name" value="UDG"/>
    <property type="match status" value="1"/>
</dbReference>
<dbReference type="PRINTS" id="PR00868">
    <property type="entry name" value="DNAPOLI"/>
</dbReference>
<dbReference type="SMART" id="SM00474">
    <property type="entry name" value="35EXOc"/>
    <property type="match status" value="1"/>
</dbReference>
<dbReference type="SMART" id="SM00482">
    <property type="entry name" value="POLAc"/>
    <property type="match status" value="1"/>
</dbReference>
<dbReference type="SUPFAM" id="SSF56672">
    <property type="entry name" value="DNA/RNA polymerases"/>
    <property type="match status" value="1"/>
</dbReference>
<dbReference type="SUPFAM" id="SSF53098">
    <property type="entry name" value="Ribonuclease H-like"/>
    <property type="match status" value="1"/>
</dbReference>
<dbReference type="SUPFAM" id="SSF52141">
    <property type="entry name" value="Uracil-DNA glycosylase-like"/>
    <property type="match status" value="1"/>
</dbReference>
<dbReference type="PROSITE" id="PS00447">
    <property type="entry name" value="DNA_POLYMERASE_A"/>
    <property type="match status" value="1"/>
</dbReference>
<reference key="1">
    <citation type="journal article" date="1992" name="Gene">
        <title>The DNA polymerase-encoding gene of Bacillus subtilis bacteriophage SPO1.</title>
        <authorList>
            <person name="Scarlato V."/>
            <person name="Gargano S."/>
        </authorList>
    </citation>
    <scope>NUCLEOTIDE SEQUENCE [GENOMIC DNA]</scope>
</reference>
<reference key="2">
    <citation type="journal article" date="1990" name="Cell">
        <title>A self-splicing group I intron in the DNA polymerase gene of Bacillus subtilis bacteriophage SPO1.</title>
        <authorList>
            <person name="Goodrich-Blair H."/>
            <person name="Scarlato V."/>
            <person name="Gott J.M."/>
            <person name="Xu M.Q."/>
            <person name="Shub D.A."/>
        </authorList>
    </citation>
    <scope>NUCLEOTIDE SEQUENCE [GENOMIC DNA] OF 552-642</scope>
</reference>
<reference key="3">
    <citation type="submission" date="1994-01" db="EMBL/GenBank/DDBJ databases">
        <authorList>
            <person name="Shub D.A."/>
        </authorList>
    </citation>
    <scope>SEQUENCE REVISION TO 555-556</scope>
</reference>
<proteinExistence type="inferred from homology"/>
<keyword id="KW-0235">DNA replication</keyword>
<keyword id="KW-0238">DNA-binding</keyword>
<keyword id="KW-0239">DNA-directed DNA polymerase</keyword>
<keyword id="KW-0269">Exonuclease</keyword>
<keyword id="KW-0378">Hydrolase</keyword>
<keyword id="KW-0540">Nuclease</keyword>
<keyword id="KW-0548">Nucleotidyltransferase</keyword>
<keyword id="KW-0808">Transferase</keyword>
<keyword id="KW-1194">Viral DNA replication</keyword>
<comment type="function">
    <text evidence="1">Replicates viral genomic DNA. This polymerase possesses two enzymatic activities: DNA synthesis (polymerase) and an exonucleolytic activity that degrades single-stranded DNA in the 3'-5' direction.</text>
</comment>
<comment type="catalytic activity">
    <reaction>
        <text>DNA(n) + a 2'-deoxyribonucleoside 5'-triphosphate = DNA(n+1) + diphosphate</text>
        <dbReference type="Rhea" id="RHEA:22508"/>
        <dbReference type="Rhea" id="RHEA-COMP:17339"/>
        <dbReference type="Rhea" id="RHEA-COMP:17340"/>
        <dbReference type="ChEBI" id="CHEBI:33019"/>
        <dbReference type="ChEBI" id="CHEBI:61560"/>
        <dbReference type="ChEBI" id="CHEBI:173112"/>
        <dbReference type="EC" id="2.7.7.7"/>
    </reaction>
</comment>
<comment type="similarity">
    <text evidence="3">Belongs to the DNA polymerase type-A family.</text>
</comment>
<evidence type="ECO:0000250" key="1">
    <source>
        <dbReference type="UniProtKB" id="P00581"/>
    </source>
</evidence>
<evidence type="ECO:0000255" key="2"/>
<evidence type="ECO:0000305" key="3"/>
<gene>
    <name type="primary">31</name>
</gene>
<accession>P30314</accession>
<organism>
    <name type="scientific">Bacillus phage SP01</name>
    <name type="common">Bacteriophage SP01</name>
    <dbReference type="NCBI Taxonomy" id="2884427"/>
    <lineage>
        <taxon>Viruses</taxon>
        <taxon>Duplodnaviria</taxon>
        <taxon>Heunggongvirae</taxon>
        <taxon>Uroviricota</taxon>
        <taxon>Caudoviricetes</taxon>
        <taxon>Herelleviridae</taxon>
        <taxon>Spounavirinae</taxon>
        <taxon>Okubovirus</taxon>
        <taxon>Okubovirus SPO1</taxon>
    </lineage>
</organism>
<name>DPOL_BPSP1</name>
<organismHost>
    <name type="scientific">Bacillus subtilis</name>
    <dbReference type="NCBI Taxonomy" id="1423"/>
</organismHost>
<feature type="chain" id="PRO_0000101265" description="DNA polymerase">
    <location>
        <begin position="1"/>
        <end position="924"/>
    </location>
</feature>
<feature type="domain" description="3'-5' exonuclease" evidence="2">
    <location>
        <begin position="235"/>
        <end position="386"/>
    </location>
</feature>